<dbReference type="EMBL" id="AM933172">
    <property type="protein sequence ID" value="CAR34831.1"/>
    <property type="molecule type" value="Genomic_DNA"/>
</dbReference>
<dbReference type="RefSeq" id="WP_001096206.1">
    <property type="nucleotide sequence ID" value="NC_011294.1"/>
</dbReference>
<dbReference type="SMR" id="B5R279"/>
<dbReference type="GeneID" id="93751944"/>
<dbReference type="KEGG" id="set:SEN3256"/>
<dbReference type="HOGENOM" id="CLU_061015_2_1_6"/>
<dbReference type="Proteomes" id="UP000000613">
    <property type="component" value="Chromosome"/>
</dbReference>
<dbReference type="GO" id="GO:1990904">
    <property type="term" value="C:ribonucleoprotein complex"/>
    <property type="evidence" value="ECO:0007669"/>
    <property type="project" value="UniProtKB-KW"/>
</dbReference>
<dbReference type="GO" id="GO:0005840">
    <property type="term" value="C:ribosome"/>
    <property type="evidence" value="ECO:0007669"/>
    <property type="project" value="UniProtKB-KW"/>
</dbReference>
<dbReference type="GO" id="GO:0019843">
    <property type="term" value="F:rRNA binding"/>
    <property type="evidence" value="ECO:0007669"/>
    <property type="project" value="UniProtKB-UniRule"/>
</dbReference>
<dbReference type="GO" id="GO:0003735">
    <property type="term" value="F:structural constituent of ribosome"/>
    <property type="evidence" value="ECO:0007669"/>
    <property type="project" value="InterPro"/>
</dbReference>
<dbReference type="GO" id="GO:0000049">
    <property type="term" value="F:tRNA binding"/>
    <property type="evidence" value="ECO:0007669"/>
    <property type="project" value="UniProtKB-UniRule"/>
</dbReference>
<dbReference type="GO" id="GO:0006412">
    <property type="term" value="P:translation"/>
    <property type="evidence" value="ECO:0007669"/>
    <property type="project" value="UniProtKB-UniRule"/>
</dbReference>
<dbReference type="FunFam" id="3.30.1440.10:FF:000001">
    <property type="entry name" value="50S ribosomal protein L5"/>
    <property type="match status" value="1"/>
</dbReference>
<dbReference type="Gene3D" id="3.30.1440.10">
    <property type="match status" value="1"/>
</dbReference>
<dbReference type="HAMAP" id="MF_01333_B">
    <property type="entry name" value="Ribosomal_uL5_B"/>
    <property type="match status" value="1"/>
</dbReference>
<dbReference type="InterPro" id="IPR002132">
    <property type="entry name" value="Ribosomal_uL5"/>
</dbReference>
<dbReference type="InterPro" id="IPR020930">
    <property type="entry name" value="Ribosomal_uL5_bac-type"/>
</dbReference>
<dbReference type="InterPro" id="IPR031309">
    <property type="entry name" value="Ribosomal_uL5_C"/>
</dbReference>
<dbReference type="InterPro" id="IPR020929">
    <property type="entry name" value="Ribosomal_uL5_CS"/>
</dbReference>
<dbReference type="InterPro" id="IPR022803">
    <property type="entry name" value="Ribosomal_uL5_dom_sf"/>
</dbReference>
<dbReference type="InterPro" id="IPR031310">
    <property type="entry name" value="Ribosomal_uL5_N"/>
</dbReference>
<dbReference type="NCBIfam" id="NF000585">
    <property type="entry name" value="PRK00010.1"/>
    <property type="match status" value="1"/>
</dbReference>
<dbReference type="PANTHER" id="PTHR11994">
    <property type="entry name" value="60S RIBOSOMAL PROTEIN L11-RELATED"/>
    <property type="match status" value="1"/>
</dbReference>
<dbReference type="Pfam" id="PF00281">
    <property type="entry name" value="Ribosomal_L5"/>
    <property type="match status" value="1"/>
</dbReference>
<dbReference type="Pfam" id="PF00673">
    <property type="entry name" value="Ribosomal_L5_C"/>
    <property type="match status" value="1"/>
</dbReference>
<dbReference type="PIRSF" id="PIRSF002161">
    <property type="entry name" value="Ribosomal_L5"/>
    <property type="match status" value="1"/>
</dbReference>
<dbReference type="SUPFAM" id="SSF55282">
    <property type="entry name" value="RL5-like"/>
    <property type="match status" value="1"/>
</dbReference>
<dbReference type="PROSITE" id="PS00358">
    <property type="entry name" value="RIBOSOMAL_L5"/>
    <property type="match status" value="1"/>
</dbReference>
<gene>
    <name evidence="1" type="primary">rplE</name>
    <name type="ordered locus">SEN3256</name>
</gene>
<accession>B5R279</accession>
<reference key="1">
    <citation type="journal article" date="2008" name="Genome Res.">
        <title>Comparative genome analysis of Salmonella enteritidis PT4 and Salmonella gallinarum 287/91 provides insights into evolutionary and host adaptation pathways.</title>
        <authorList>
            <person name="Thomson N.R."/>
            <person name="Clayton D.J."/>
            <person name="Windhorst D."/>
            <person name="Vernikos G."/>
            <person name="Davidson S."/>
            <person name="Churcher C."/>
            <person name="Quail M.A."/>
            <person name="Stevens M."/>
            <person name="Jones M.A."/>
            <person name="Watson M."/>
            <person name="Barron A."/>
            <person name="Layton A."/>
            <person name="Pickard D."/>
            <person name="Kingsley R.A."/>
            <person name="Bignell A."/>
            <person name="Clark L."/>
            <person name="Harris B."/>
            <person name="Ormond D."/>
            <person name="Abdellah Z."/>
            <person name="Brooks K."/>
            <person name="Cherevach I."/>
            <person name="Chillingworth T."/>
            <person name="Woodward J."/>
            <person name="Norberczak H."/>
            <person name="Lord A."/>
            <person name="Arrowsmith C."/>
            <person name="Jagels K."/>
            <person name="Moule S."/>
            <person name="Mungall K."/>
            <person name="Saunders M."/>
            <person name="Whitehead S."/>
            <person name="Chabalgoity J.A."/>
            <person name="Maskell D."/>
            <person name="Humphreys T."/>
            <person name="Roberts M."/>
            <person name="Barrow P.A."/>
            <person name="Dougan G."/>
            <person name="Parkhill J."/>
        </authorList>
    </citation>
    <scope>NUCLEOTIDE SEQUENCE [LARGE SCALE GENOMIC DNA]</scope>
    <source>
        <strain>P125109</strain>
    </source>
</reference>
<name>RL5_SALEP</name>
<evidence type="ECO:0000255" key="1">
    <source>
        <dbReference type="HAMAP-Rule" id="MF_01333"/>
    </source>
</evidence>
<evidence type="ECO:0000305" key="2"/>
<organism>
    <name type="scientific">Salmonella enteritidis PT4 (strain P125109)</name>
    <dbReference type="NCBI Taxonomy" id="550537"/>
    <lineage>
        <taxon>Bacteria</taxon>
        <taxon>Pseudomonadati</taxon>
        <taxon>Pseudomonadota</taxon>
        <taxon>Gammaproteobacteria</taxon>
        <taxon>Enterobacterales</taxon>
        <taxon>Enterobacteriaceae</taxon>
        <taxon>Salmonella</taxon>
    </lineage>
</organism>
<proteinExistence type="inferred from homology"/>
<protein>
    <recommendedName>
        <fullName evidence="1">Large ribosomal subunit protein uL5</fullName>
    </recommendedName>
    <alternativeName>
        <fullName evidence="2">50S ribosomal protein L5</fullName>
    </alternativeName>
</protein>
<feature type="chain" id="PRO_1000142444" description="Large ribosomal subunit protein uL5">
    <location>
        <begin position="1"/>
        <end position="179"/>
    </location>
</feature>
<comment type="function">
    <text evidence="1">This is one of the proteins that bind and probably mediate the attachment of the 5S RNA into the large ribosomal subunit, where it forms part of the central protuberance. In the 70S ribosome it contacts protein S13 of the 30S subunit (bridge B1b), connecting the 2 subunits; this bridge is implicated in subunit movement. Contacts the P site tRNA; the 5S rRNA and some of its associated proteins might help stabilize positioning of ribosome-bound tRNAs.</text>
</comment>
<comment type="subunit">
    <text evidence="1">Part of the 50S ribosomal subunit; part of the 5S rRNA/L5/L18/L25 subcomplex. Contacts the 5S rRNA and the P site tRNA. Forms a bridge to the 30S subunit in the 70S ribosome.</text>
</comment>
<comment type="similarity">
    <text evidence="1">Belongs to the universal ribosomal protein uL5 family.</text>
</comment>
<sequence length="179" mass="20318">MAKLHDYYKDEVVNKLMTEFNYNSVMQVPRVEKITLNMGVGEAIADKKLLDNAAADLTAISGQKPLITKARKSVAGFKIRQGYPIGCKVTLRGERMWEFFERLITIAVPRIRDFRGLSAKSFDGRGNYSMGVREQIIFPEIDYDKVDRVRGLDITITTTAKSDEEGRALLAAFDFPFRK</sequence>
<keyword id="KW-0687">Ribonucleoprotein</keyword>
<keyword id="KW-0689">Ribosomal protein</keyword>
<keyword id="KW-0694">RNA-binding</keyword>
<keyword id="KW-0699">rRNA-binding</keyword>
<keyword id="KW-0820">tRNA-binding</keyword>